<dbReference type="EC" id="3.6.1.66" evidence="1"/>
<dbReference type="EMBL" id="AE016795">
    <property type="protein sequence ID" value="AAO09946.2"/>
    <property type="molecule type" value="Genomic_DNA"/>
</dbReference>
<dbReference type="RefSeq" id="WP_011079456.1">
    <property type="nucleotide sequence ID" value="NC_004459.3"/>
</dbReference>
<dbReference type="SMR" id="Q8DCB9"/>
<dbReference type="KEGG" id="vvu:VV1_1520"/>
<dbReference type="HOGENOM" id="CLU_082080_0_3_6"/>
<dbReference type="Proteomes" id="UP000002275">
    <property type="component" value="Chromosome 1"/>
</dbReference>
<dbReference type="GO" id="GO:0005829">
    <property type="term" value="C:cytosol"/>
    <property type="evidence" value="ECO:0007669"/>
    <property type="project" value="TreeGrafter"/>
</dbReference>
<dbReference type="GO" id="GO:0035870">
    <property type="term" value="F:dITP diphosphatase activity"/>
    <property type="evidence" value="ECO:0007669"/>
    <property type="project" value="RHEA"/>
</dbReference>
<dbReference type="GO" id="GO:0036220">
    <property type="term" value="F:ITP diphosphatase activity"/>
    <property type="evidence" value="ECO:0007669"/>
    <property type="project" value="UniProtKB-EC"/>
</dbReference>
<dbReference type="GO" id="GO:0046872">
    <property type="term" value="F:metal ion binding"/>
    <property type="evidence" value="ECO:0007669"/>
    <property type="project" value="UniProtKB-KW"/>
</dbReference>
<dbReference type="GO" id="GO:0000166">
    <property type="term" value="F:nucleotide binding"/>
    <property type="evidence" value="ECO:0007669"/>
    <property type="project" value="UniProtKB-KW"/>
</dbReference>
<dbReference type="GO" id="GO:0017111">
    <property type="term" value="F:ribonucleoside triphosphate phosphatase activity"/>
    <property type="evidence" value="ECO:0007669"/>
    <property type="project" value="InterPro"/>
</dbReference>
<dbReference type="GO" id="GO:0036222">
    <property type="term" value="F:XTP diphosphatase activity"/>
    <property type="evidence" value="ECO:0007669"/>
    <property type="project" value="RHEA"/>
</dbReference>
<dbReference type="GO" id="GO:0009117">
    <property type="term" value="P:nucleotide metabolic process"/>
    <property type="evidence" value="ECO:0007669"/>
    <property type="project" value="UniProtKB-KW"/>
</dbReference>
<dbReference type="GO" id="GO:0009146">
    <property type="term" value="P:purine nucleoside triphosphate catabolic process"/>
    <property type="evidence" value="ECO:0007669"/>
    <property type="project" value="UniProtKB-UniRule"/>
</dbReference>
<dbReference type="CDD" id="cd00515">
    <property type="entry name" value="HAM1"/>
    <property type="match status" value="1"/>
</dbReference>
<dbReference type="FunFam" id="3.90.950.10:FF:000001">
    <property type="entry name" value="dITP/XTP pyrophosphatase"/>
    <property type="match status" value="1"/>
</dbReference>
<dbReference type="Gene3D" id="3.90.950.10">
    <property type="match status" value="1"/>
</dbReference>
<dbReference type="HAMAP" id="MF_01405">
    <property type="entry name" value="Non_canon_purine_NTPase"/>
    <property type="match status" value="1"/>
</dbReference>
<dbReference type="InterPro" id="IPR020922">
    <property type="entry name" value="dITP/XTP_pyrophosphatase"/>
</dbReference>
<dbReference type="InterPro" id="IPR029001">
    <property type="entry name" value="ITPase-like_fam"/>
</dbReference>
<dbReference type="InterPro" id="IPR002637">
    <property type="entry name" value="RdgB/HAM1"/>
</dbReference>
<dbReference type="NCBIfam" id="NF011397">
    <property type="entry name" value="PRK14822.1"/>
    <property type="match status" value="1"/>
</dbReference>
<dbReference type="NCBIfam" id="TIGR00042">
    <property type="entry name" value="RdgB/HAM1 family non-canonical purine NTP pyrophosphatase"/>
    <property type="match status" value="1"/>
</dbReference>
<dbReference type="PANTHER" id="PTHR11067:SF9">
    <property type="entry name" value="INOSINE TRIPHOSPHATE PYROPHOSPHATASE"/>
    <property type="match status" value="1"/>
</dbReference>
<dbReference type="PANTHER" id="PTHR11067">
    <property type="entry name" value="INOSINE TRIPHOSPHATE PYROPHOSPHATASE/HAM1 PROTEIN"/>
    <property type="match status" value="1"/>
</dbReference>
<dbReference type="Pfam" id="PF01725">
    <property type="entry name" value="Ham1p_like"/>
    <property type="match status" value="1"/>
</dbReference>
<dbReference type="SUPFAM" id="SSF52972">
    <property type="entry name" value="ITPase-like"/>
    <property type="match status" value="1"/>
</dbReference>
<comment type="function">
    <text evidence="1">Pyrophosphatase that catalyzes the hydrolysis of nucleoside triphosphates to their monophosphate derivatives, with a high preference for the non-canonical purine nucleotides XTP (xanthosine triphosphate), dITP (deoxyinosine triphosphate) and ITP. Seems to function as a house-cleaning enzyme that removes non-canonical purine nucleotides from the nucleotide pool, thus preventing their incorporation into DNA/RNA and avoiding chromosomal lesions.</text>
</comment>
<comment type="catalytic activity">
    <reaction evidence="1">
        <text>XTP + H2O = XMP + diphosphate + H(+)</text>
        <dbReference type="Rhea" id="RHEA:28610"/>
        <dbReference type="ChEBI" id="CHEBI:15377"/>
        <dbReference type="ChEBI" id="CHEBI:15378"/>
        <dbReference type="ChEBI" id="CHEBI:33019"/>
        <dbReference type="ChEBI" id="CHEBI:57464"/>
        <dbReference type="ChEBI" id="CHEBI:61314"/>
        <dbReference type="EC" id="3.6.1.66"/>
    </reaction>
</comment>
<comment type="catalytic activity">
    <reaction evidence="1">
        <text>dITP + H2O = dIMP + diphosphate + H(+)</text>
        <dbReference type="Rhea" id="RHEA:28342"/>
        <dbReference type="ChEBI" id="CHEBI:15377"/>
        <dbReference type="ChEBI" id="CHEBI:15378"/>
        <dbReference type="ChEBI" id="CHEBI:33019"/>
        <dbReference type="ChEBI" id="CHEBI:61194"/>
        <dbReference type="ChEBI" id="CHEBI:61382"/>
        <dbReference type="EC" id="3.6.1.66"/>
    </reaction>
</comment>
<comment type="catalytic activity">
    <reaction evidence="1">
        <text>ITP + H2O = IMP + diphosphate + H(+)</text>
        <dbReference type="Rhea" id="RHEA:29399"/>
        <dbReference type="ChEBI" id="CHEBI:15377"/>
        <dbReference type="ChEBI" id="CHEBI:15378"/>
        <dbReference type="ChEBI" id="CHEBI:33019"/>
        <dbReference type="ChEBI" id="CHEBI:58053"/>
        <dbReference type="ChEBI" id="CHEBI:61402"/>
        <dbReference type="EC" id="3.6.1.66"/>
    </reaction>
</comment>
<comment type="cofactor">
    <cofactor evidence="1">
        <name>Mg(2+)</name>
        <dbReference type="ChEBI" id="CHEBI:18420"/>
    </cofactor>
    <text evidence="1">Binds 1 Mg(2+) ion per subunit.</text>
</comment>
<comment type="subunit">
    <text evidence="1">Homodimer.</text>
</comment>
<comment type="similarity">
    <text evidence="1">Belongs to the HAM1 NTPase family.</text>
</comment>
<feature type="chain" id="PRO_0000178262" description="dITP/XTP pyrophosphatase">
    <location>
        <begin position="1"/>
        <end position="200"/>
    </location>
</feature>
<feature type="active site" description="Proton acceptor" evidence="1">
    <location>
        <position position="69"/>
    </location>
</feature>
<feature type="binding site" evidence="1">
    <location>
        <begin position="8"/>
        <end position="13"/>
    </location>
    <ligand>
        <name>substrate</name>
    </ligand>
</feature>
<feature type="binding site" evidence="1">
    <location>
        <position position="69"/>
    </location>
    <ligand>
        <name>Mg(2+)</name>
        <dbReference type="ChEBI" id="CHEBI:18420"/>
    </ligand>
</feature>
<feature type="binding site" evidence="1">
    <location>
        <position position="70"/>
    </location>
    <ligand>
        <name>substrate</name>
    </ligand>
</feature>
<feature type="binding site" evidence="1">
    <location>
        <begin position="154"/>
        <end position="157"/>
    </location>
    <ligand>
        <name>substrate</name>
    </ligand>
</feature>
<feature type="binding site" evidence="1">
    <location>
        <position position="177"/>
    </location>
    <ligand>
        <name>substrate</name>
    </ligand>
</feature>
<feature type="binding site" evidence="1">
    <location>
        <begin position="182"/>
        <end position="183"/>
    </location>
    <ligand>
        <name>substrate</name>
    </ligand>
</feature>
<name>IXTPA_VIBVU</name>
<protein>
    <recommendedName>
        <fullName evidence="1">dITP/XTP pyrophosphatase</fullName>
        <ecNumber evidence="1">3.6.1.66</ecNumber>
    </recommendedName>
    <alternativeName>
        <fullName evidence="1">Non-canonical purine NTP pyrophosphatase</fullName>
    </alternativeName>
    <alternativeName>
        <fullName evidence="1">Non-standard purine NTP pyrophosphatase</fullName>
    </alternativeName>
    <alternativeName>
        <fullName evidence="1">Nucleoside-triphosphate diphosphatase</fullName>
    </alternativeName>
    <alternativeName>
        <fullName evidence="1">Nucleoside-triphosphate pyrophosphatase</fullName>
        <shortName evidence="1">NTPase</shortName>
    </alternativeName>
</protein>
<keyword id="KW-0378">Hydrolase</keyword>
<keyword id="KW-0460">Magnesium</keyword>
<keyword id="KW-0479">Metal-binding</keyword>
<keyword id="KW-0546">Nucleotide metabolism</keyword>
<keyword id="KW-0547">Nucleotide-binding</keyword>
<reference key="1">
    <citation type="submission" date="2002-12" db="EMBL/GenBank/DDBJ databases">
        <title>Complete genome sequence of Vibrio vulnificus CMCP6.</title>
        <authorList>
            <person name="Rhee J.H."/>
            <person name="Kim S.Y."/>
            <person name="Chung S.S."/>
            <person name="Kim J.J."/>
            <person name="Moon Y.H."/>
            <person name="Jeong H."/>
            <person name="Choy H.E."/>
        </authorList>
    </citation>
    <scope>NUCLEOTIDE SEQUENCE [LARGE SCALE GENOMIC DNA]</scope>
    <source>
        <strain>CMCP6</strain>
    </source>
</reference>
<organism>
    <name type="scientific">Vibrio vulnificus (strain CMCP6)</name>
    <dbReference type="NCBI Taxonomy" id="216895"/>
    <lineage>
        <taxon>Bacteria</taxon>
        <taxon>Pseudomonadati</taxon>
        <taxon>Pseudomonadota</taxon>
        <taxon>Gammaproteobacteria</taxon>
        <taxon>Vibrionales</taxon>
        <taxon>Vibrionaceae</taxon>
        <taxon>Vibrio</taxon>
    </lineage>
</organism>
<gene>
    <name type="ordered locus">VV1_1520</name>
</gene>
<accession>Q8DCB9</accession>
<sequence>MKKIVLATGNQGKVREMADLLADFGFDVVAQSEFNVSEVAETGTTFIENAIIKARHAAKETGLAAIADDSGLEVDFLQGAPGIYSARYAGEKASDQENLEKLLTAMEGVPEAQRTARFHCVLVLMRHENDPTPIVCHGKWEGRILTQAHGDNGFGYDPIFFVPEDNCASAELEPVRKKQLSHRGKALKQLFATLREQPLV</sequence>
<evidence type="ECO:0000255" key="1">
    <source>
        <dbReference type="HAMAP-Rule" id="MF_01405"/>
    </source>
</evidence>
<proteinExistence type="inferred from homology"/>